<accession>Q04HW4</accession>
<comment type="function">
    <text evidence="1">Associates with the EF-Tu.GDP complex and induces the exchange of GDP to GTP. It remains bound to the aminoacyl-tRNA.EF-Tu.GTP complex up to the GTP hydrolysis stage on the ribosome.</text>
</comment>
<comment type="subcellular location">
    <subcellularLocation>
        <location evidence="1">Cytoplasm</location>
    </subcellularLocation>
</comment>
<comment type="similarity">
    <text evidence="1">Belongs to the EF-Ts family.</text>
</comment>
<dbReference type="EMBL" id="CP000410">
    <property type="protein sequence ID" value="ABJ54372.1"/>
    <property type="molecule type" value="Genomic_DNA"/>
</dbReference>
<dbReference type="RefSeq" id="WP_000808063.1">
    <property type="nucleotide sequence ID" value="NZ_JAMLJR010000007.1"/>
</dbReference>
<dbReference type="SMR" id="Q04HW4"/>
<dbReference type="PaxDb" id="373153-SPD_2041"/>
<dbReference type="GeneID" id="45652566"/>
<dbReference type="KEGG" id="spd:SPD_2041"/>
<dbReference type="eggNOG" id="COG0264">
    <property type="taxonomic scope" value="Bacteria"/>
</dbReference>
<dbReference type="HOGENOM" id="CLU_047155_0_1_9"/>
<dbReference type="BioCyc" id="SPNE373153:G1G6V-2191-MONOMER"/>
<dbReference type="Proteomes" id="UP000001452">
    <property type="component" value="Chromosome"/>
</dbReference>
<dbReference type="GO" id="GO:0005737">
    <property type="term" value="C:cytoplasm"/>
    <property type="evidence" value="ECO:0007669"/>
    <property type="project" value="UniProtKB-SubCell"/>
</dbReference>
<dbReference type="GO" id="GO:0003746">
    <property type="term" value="F:translation elongation factor activity"/>
    <property type="evidence" value="ECO:0007669"/>
    <property type="project" value="UniProtKB-UniRule"/>
</dbReference>
<dbReference type="CDD" id="cd14275">
    <property type="entry name" value="UBA_EF-Ts"/>
    <property type="match status" value="1"/>
</dbReference>
<dbReference type="FunFam" id="1.10.286.20:FF:000004">
    <property type="entry name" value="Elongation factor Ts"/>
    <property type="match status" value="1"/>
</dbReference>
<dbReference type="FunFam" id="1.10.8.10:FF:000001">
    <property type="entry name" value="Elongation factor Ts"/>
    <property type="match status" value="1"/>
</dbReference>
<dbReference type="FunFam" id="3.30.479.20:FF:000009">
    <property type="entry name" value="Elongation factor Ts"/>
    <property type="match status" value="1"/>
</dbReference>
<dbReference type="FunFam" id="3.30.479.20:FF:000013">
    <property type="entry name" value="Elongation factor Ts"/>
    <property type="match status" value="1"/>
</dbReference>
<dbReference type="FunFam" id="3.30.479.20:FF:000016">
    <property type="entry name" value="Elongation factor Ts"/>
    <property type="match status" value="1"/>
</dbReference>
<dbReference type="Gene3D" id="1.10.286.20">
    <property type="match status" value="1"/>
</dbReference>
<dbReference type="Gene3D" id="1.10.8.10">
    <property type="entry name" value="DNA helicase RuvA subunit, C-terminal domain"/>
    <property type="match status" value="1"/>
</dbReference>
<dbReference type="Gene3D" id="3.30.479.20">
    <property type="entry name" value="Elongation factor Ts, dimerisation domain"/>
    <property type="match status" value="2"/>
</dbReference>
<dbReference type="HAMAP" id="MF_00050">
    <property type="entry name" value="EF_Ts"/>
    <property type="match status" value="1"/>
</dbReference>
<dbReference type="InterPro" id="IPR036402">
    <property type="entry name" value="EF-Ts_dimer_sf"/>
</dbReference>
<dbReference type="InterPro" id="IPR001816">
    <property type="entry name" value="Transl_elong_EFTs/EF1B"/>
</dbReference>
<dbReference type="InterPro" id="IPR014039">
    <property type="entry name" value="Transl_elong_EFTs/EF1B_dimer"/>
</dbReference>
<dbReference type="InterPro" id="IPR018101">
    <property type="entry name" value="Transl_elong_Ts_CS"/>
</dbReference>
<dbReference type="InterPro" id="IPR009060">
    <property type="entry name" value="UBA-like_sf"/>
</dbReference>
<dbReference type="NCBIfam" id="TIGR00116">
    <property type="entry name" value="tsf"/>
    <property type="match status" value="1"/>
</dbReference>
<dbReference type="PANTHER" id="PTHR11741">
    <property type="entry name" value="ELONGATION FACTOR TS"/>
    <property type="match status" value="1"/>
</dbReference>
<dbReference type="PANTHER" id="PTHR11741:SF0">
    <property type="entry name" value="ELONGATION FACTOR TS, MITOCHONDRIAL"/>
    <property type="match status" value="1"/>
</dbReference>
<dbReference type="Pfam" id="PF00889">
    <property type="entry name" value="EF_TS"/>
    <property type="match status" value="1"/>
</dbReference>
<dbReference type="SUPFAM" id="SSF54713">
    <property type="entry name" value="Elongation factor Ts (EF-Ts), dimerisation domain"/>
    <property type="match status" value="2"/>
</dbReference>
<dbReference type="SUPFAM" id="SSF46934">
    <property type="entry name" value="UBA-like"/>
    <property type="match status" value="1"/>
</dbReference>
<dbReference type="PROSITE" id="PS01126">
    <property type="entry name" value="EF_TS_1"/>
    <property type="match status" value="1"/>
</dbReference>
<dbReference type="PROSITE" id="PS01127">
    <property type="entry name" value="EF_TS_2"/>
    <property type="match status" value="1"/>
</dbReference>
<protein>
    <recommendedName>
        <fullName evidence="1">Elongation factor Ts</fullName>
        <shortName evidence="1">EF-Ts</shortName>
    </recommendedName>
</protein>
<name>EFTS_STRP2</name>
<feature type="chain" id="PRO_1000006190" description="Elongation factor Ts">
    <location>
        <begin position="1"/>
        <end position="346"/>
    </location>
</feature>
<feature type="region of interest" description="Involved in Mg(2+) ion dislocation from EF-Tu" evidence="1">
    <location>
        <begin position="80"/>
        <end position="83"/>
    </location>
</feature>
<gene>
    <name evidence="1" type="primary">tsf</name>
    <name type="ordered locus">SPD_2041</name>
</gene>
<organism>
    <name type="scientific">Streptococcus pneumoniae serotype 2 (strain D39 / NCTC 7466)</name>
    <dbReference type="NCBI Taxonomy" id="373153"/>
    <lineage>
        <taxon>Bacteria</taxon>
        <taxon>Bacillati</taxon>
        <taxon>Bacillota</taxon>
        <taxon>Bacilli</taxon>
        <taxon>Lactobacillales</taxon>
        <taxon>Streptococcaceae</taxon>
        <taxon>Streptococcus</taxon>
    </lineage>
</organism>
<evidence type="ECO:0000255" key="1">
    <source>
        <dbReference type="HAMAP-Rule" id="MF_00050"/>
    </source>
</evidence>
<keyword id="KW-0963">Cytoplasm</keyword>
<keyword id="KW-0251">Elongation factor</keyword>
<keyword id="KW-0648">Protein biosynthesis</keyword>
<keyword id="KW-1185">Reference proteome</keyword>
<proteinExistence type="inferred from homology"/>
<reference key="1">
    <citation type="journal article" date="2007" name="J. Bacteriol.">
        <title>Genome sequence of Avery's virulent serotype 2 strain D39 of Streptococcus pneumoniae and comparison with that of unencapsulated laboratory strain R6.</title>
        <authorList>
            <person name="Lanie J.A."/>
            <person name="Ng W.-L."/>
            <person name="Kazmierczak K.M."/>
            <person name="Andrzejewski T.M."/>
            <person name="Davidsen T.M."/>
            <person name="Wayne K.J."/>
            <person name="Tettelin H."/>
            <person name="Glass J.I."/>
            <person name="Winkler M.E."/>
        </authorList>
    </citation>
    <scope>NUCLEOTIDE SEQUENCE [LARGE SCALE GENOMIC DNA]</scope>
    <source>
        <strain>D39 / NCTC 7466</strain>
    </source>
</reference>
<sequence>MAEITAKLVKELREKSGAGVMDAKKALVETDGDIEKAIELLREKGMAKAAKKADRVAAEGLTGVYVNGNVAAVIEVNAETDFVAKNAQFVELVNTTAKVIAEGKPANNEEALALIMPSGETLEAAYVSATATIGEKISFRRFALIEKTDAQHFGAYQHNGGRIGVISVVEGGDEALAKQLSMHIAAMKPTVLSYKELDEQFVKDELAQLNHVIDQDNESRAMVNKPALPHLKYGSKAQLTDDVIAQAEADIKAELAAEGKPEKIWDKIIPGKMDRFMLDNTKVDQAYTLLAQVYIMDDSKTVEAYLESVNASVVEFARFEVGEGIEKAANDFEAEVAATMAAALNN</sequence>